<keyword id="KW-0963">Cytoplasm</keyword>
<keyword id="KW-0227">DNA damage</keyword>
<keyword id="KW-0233">DNA recombination</keyword>
<keyword id="KW-0234">DNA repair</keyword>
<keyword id="KW-0238">DNA-binding</keyword>
<organism>
    <name type="scientific">Pediococcus pentosaceus (strain ATCC 25745 / CCUG 21536 / LMG 10740 / 183-1w)</name>
    <dbReference type="NCBI Taxonomy" id="278197"/>
    <lineage>
        <taxon>Bacteria</taxon>
        <taxon>Bacillati</taxon>
        <taxon>Bacillota</taxon>
        <taxon>Bacilli</taxon>
        <taxon>Lactobacillales</taxon>
        <taxon>Lactobacillaceae</taxon>
        <taxon>Pediococcus</taxon>
    </lineage>
</organism>
<gene>
    <name evidence="1" type="primary">ruvA</name>
    <name type="ordered locus">PEPE_1272</name>
</gene>
<comment type="function">
    <text evidence="1">The RuvA-RuvB-RuvC complex processes Holliday junction (HJ) DNA during genetic recombination and DNA repair, while the RuvA-RuvB complex plays an important role in the rescue of blocked DNA replication forks via replication fork reversal (RFR). RuvA specifically binds to HJ cruciform DNA, conferring on it an open structure. The RuvB hexamer acts as an ATP-dependent pump, pulling dsDNA into and through the RuvAB complex. HJ branch migration allows RuvC to scan DNA until it finds its consensus sequence, where it cleaves and resolves the cruciform DNA.</text>
</comment>
<comment type="subunit">
    <text evidence="1">Homotetramer. Forms an RuvA(8)-RuvB(12)-Holliday junction (HJ) complex. HJ DNA is sandwiched between 2 RuvA tetramers; dsDNA enters through RuvA and exits via RuvB. An RuvB hexamer assembles on each DNA strand where it exits the tetramer. Each RuvB hexamer is contacted by two RuvA subunits (via domain III) on 2 adjacent RuvB subunits; this complex drives branch migration. In the full resolvosome a probable DNA-RuvA(4)-RuvB(12)-RuvC(2) complex forms which resolves the HJ.</text>
</comment>
<comment type="subcellular location">
    <subcellularLocation>
        <location evidence="1">Cytoplasm</location>
    </subcellularLocation>
</comment>
<comment type="domain">
    <text evidence="1">Has three domains with a flexible linker between the domains II and III and assumes an 'L' shape. Domain III is highly mobile and contacts RuvB.</text>
</comment>
<comment type="similarity">
    <text evidence="1">Belongs to the RuvA family.</text>
</comment>
<accession>Q03EQ9</accession>
<dbReference type="EMBL" id="CP000422">
    <property type="protein sequence ID" value="ABJ68313.1"/>
    <property type="molecule type" value="Genomic_DNA"/>
</dbReference>
<dbReference type="RefSeq" id="WP_002833732.1">
    <property type="nucleotide sequence ID" value="NC_008525.1"/>
</dbReference>
<dbReference type="SMR" id="Q03EQ9"/>
<dbReference type="STRING" id="278197.PEPE_1272"/>
<dbReference type="GeneID" id="33061707"/>
<dbReference type="KEGG" id="ppe:PEPE_1272"/>
<dbReference type="eggNOG" id="COG0632">
    <property type="taxonomic scope" value="Bacteria"/>
</dbReference>
<dbReference type="HOGENOM" id="CLU_087936_1_0_9"/>
<dbReference type="OrthoDB" id="5293449at2"/>
<dbReference type="Proteomes" id="UP000000773">
    <property type="component" value="Chromosome"/>
</dbReference>
<dbReference type="GO" id="GO:0005737">
    <property type="term" value="C:cytoplasm"/>
    <property type="evidence" value="ECO:0007669"/>
    <property type="project" value="UniProtKB-SubCell"/>
</dbReference>
<dbReference type="GO" id="GO:0009379">
    <property type="term" value="C:Holliday junction helicase complex"/>
    <property type="evidence" value="ECO:0007669"/>
    <property type="project" value="InterPro"/>
</dbReference>
<dbReference type="GO" id="GO:0048476">
    <property type="term" value="C:Holliday junction resolvase complex"/>
    <property type="evidence" value="ECO:0007669"/>
    <property type="project" value="UniProtKB-UniRule"/>
</dbReference>
<dbReference type="GO" id="GO:0005524">
    <property type="term" value="F:ATP binding"/>
    <property type="evidence" value="ECO:0007669"/>
    <property type="project" value="InterPro"/>
</dbReference>
<dbReference type="GO" id="GO:0000400">
    <property type="term" value="F:four-way junction DNA binding"/>
    <property type="evidence" value="ECO:0007669"/>
    <property type="project" value="UniProtKB-UniRule"/>
</dbReference>
<dbReference type="GO" id="GO:0009378">
    <property type="term" value="F:four-way junction helicase activity"/>
    <property type="evidence" value="ECO:0007669"/>
    <property type="project" value="InterPro"/>
</dbReference>
<dbReference type="GO" id="GO:0006310">
    <property type="term" value="P:DNA recombination"/>
    <property type="evidence" value="ECO:0007669"/>
    <property type="project" value="UniProtKB-UniRule"/>
</dbReference>
<dbReference type="GO" id="GO:0006281">
    <property type="term" value="P:DNA repair"/>
    <property type="evidence" value="ECO:0007669"/>
    <property type="project" value="UniProtKB-UniRule"/>
</dbReference>
<dbReference type="CDD" id="cd14332">
    <property type="entry name" value="UBA_RuvA_C"/>
    <property type="match status" value="1"/>
</dbReference>
<dbReference type="Gene3D" id="1.10.150.20">
    <property type="entry name" value="5' to 3' exonuclease, C-terminal subdomain"/>
    <property type="match status" value="1"/>
</dbReference>
<dbReference type="Gene3D" id="1.10.8.10">
    <property type="entry name" value="DNA helicase RuvA subunit, C-terminal domain"/>
    <property type="match status" value="1"/>
</dbReference>
<dbReference type="Gene3D" id="2.40.50.140">
    <property type="entry name" value="Nucleic acid-binding proteins"/>
    <property type="match status" value="1"/>
</dbReference>
<dbReference type="HAMAP" id="MF_00031">
    <property type="entry name" value="DNA_HJ_migration_RuvA"/>
    <property type="match status" value="1"/>
</dbReference>
<dbReference type="InterPro" id="IPR013849">
    <property type="entry name" value="DNA_helicase_Holl-junc_RuvA_I"/>
</dbReference>
<dbReference type="InterPro" id="IPR003583">
    <property type="entry name" value="Hlx-hairpin-Hlx_DNA-bd_motif"/>
</dbReference>
<dbReference type="InterPro" id="IPR012340">
    <property type="entry name" value="NA-bd_OB-fold"/>
</dbReference>
<dbReference type="InterPro" id="IPR000085">
    <property type="entry name" value="RuvA"/>
</dbReference>
<dbReference type="InterPro" id="IPR010994">
    <property type="entry name" value="RuvA_2-like"/>
</dbReference>
<dbReference type="InterPro" id="IPR011114">
    <property type="entry name" value="RuvA_C"/>
</dbReference>
<dbReference type="InterPro" id="IPR036267">
    <property type="entry name" value="RuvA_C_sf"/>
</dbReference>
<dbReference type="NCBIfam" id="TIGR00084">
    <property type="entry name" value="ruvA"/>
    <property type="match status" value="1"/>
</dbReference>
<dbReference type="Pfam" id="PF14520">
    <property type="entry name" value="HHH_5"/>
    <property type="match status" value="1"/>
</dbReference>
<dbReference type="Pfam" id="PF07499">
    <property type="entry name" value="RuvA_C"/>
    <property type="match status" value="1"/>
</dbReference>
<dbReference type="Pfam" id="PF01330">
    <property type="entry name" value="RuvA_N"/>
    <property type="match status" value="1"/>
</dbReference>
<dbReference type="SMART" id="SM00278">
    <property type="entry name" value="HhH1"/>
    <property type="match status" value="2"/>
</dbReference>
<dbReference type="SUPFAM" id="SSF46929">
    <property type="entry name" value="DNA helicase RuvA subunit, C-terminal domain"/>
    <property type="match status" value="1"/>
</dbReference>
<dbReference type="SUPFAM" id="SSF50249">
    <property type="entry name" value="Nucleic acid-binding proteins"/>
    <property type="match status" value="1"/>
</dbReference>
<dbReference type="SUPFAM" id="SSF47781">
    <property type="entry name" value="RuvA domain 2-like"/>
    <property type="match status" value="1"/>
</dbReference>
<feature type="chain" id="PRO_1000002508" description="Holliday junction branch migration complex subunit RuvA">
    <location>
        <begin position="1"/>
        <end position="195"/>
    </location>
</feature>
<feature type="region of interest" description="Domain I" evidence="1">
    <location>
        <begin position="1"/>
        <end position="61"/>
    </location>
</feature>
<feature type="region of interest" description="Domain II" evidence="1">
    <location>
        <begin position="62"/>
        <end position="139"/>
    </location>
</feature>
<feature type="region of interest" description="Flexible linker" evidence="1">
    <location>
        <begin position="139"/>
        <end position="143"/>
    </location>
</feature>
<feature type="region of interest" description="Domain III" evidence="1">
    <location>
        <begin position="144"/>
        <end position="195"/>
    </location>
</feature>
<protein>
    <recommendedName>
        <fullName evidence="1">Holliday junction branch migration complex subunit RuvA</fullName>
    </recommendedName>
</protein>
<evidence type="ECO:0000255" key="1">
    <source>
        <dbReference type="HAMAP-Rule" id="MF_00031"/>
    </source>
</evidence>
<reference key="1">
    <citation type="journal article" date="2006" name="Proc. Natl. Acad. Sci. U.S.A.">
        <title>Comparative genomics of the lactic acid bacteria.</title>
        <authorList>
            <person name="Makarova K.S."/>
            <person name="Slesarev A."/>
            <person name="Wolf Y.I."/>
            <person name="Sorokin A."/>
            <person name="Mirkin B."/>
            <person name="Koonin E.V."/>
            <person name="Pavlov A."/>
            <person name="Pavlova N."/>
            <person name="Karamychev V."/>
            <person name="Polouchine N."/>
            <person name="Shakhova V."/>
            <person name="Grigoriev I."/>
            <person name="Lou Y."/>
            <person name="Rohksar D."/>
            <person name="Lucas S."/>
            <person name="Huang K."/>
            <person name="Goodstein D.M."/>
            <person name="Hawkins T."/>
            <person name="Plengvidhya V."/>
            <person name="Welker D."/>
            <person name="Hughes J."/>
            <person name="Goh Y."/>
            <person name="Benson A."/>
            <person name="Baldwin K."/>
            <person name="Lee J.-H."/>
            <person name="Diaz-Muniz I."/>
            <person name="Dosti B."/>
            <person name="Smeianov V."/>
            <person name="Wechter W."/>
            <person name="Barabote R."/>
            <person name="Lorca G."/>
            <person name="Altermann E."/>
            <person name="Barrangou R."/>
            <person name="Ganesan B."/>
            <person name="Xie Y."/>
            <person name="Rawsthorne H."/>
            <person name="Tamir D."/>
            <person name="Parker C."/>
            <person name="Breidt F."/>
            <person name="Broadbent J.R."/>
            <person name="Hutkins R."/>
            <person name="O'Sullivan D."/>
            <person name="Steele J."/>
            <person name="Unlu G."/>
            <person name="Saier M.H. Jr."/>
            <person name="Klaenhammer T."/>
            <person name="Richardson P."/>
            <person name="Kozyavkin S."/>
            <person name="Weimer B.C."/>
            <person name="Mills D.A."/>
        </authorList>
    </citation>
    <scope>NUCLEOTIDE SEQUENCE [LARGE SCALE GENOMIC DNA]</scope>
    <source>
        <strain>ATCC 25745 / CCUG 21536 / LMG 10740 / 183-1w</strain>
    </source>
</reference>
<proteinExistence type="inferred from homology"/>
<name>RUVA_PEDPA</name>
<sequence length="195" mass="21397">MYEYLDGVVVNVNPAYIVVDVNGVGFLVNVANPYSFELDAKQKVFVHQAVSENDQTLYGFKKAEDKELFLNLLKVKGIGPKSALAILANDDHTGLINAINNDDVSYLKKFPKIGPKAAQQIILDLKGKVAVENEVGTLFDLSTTSNQALDEALEALIALGYSEKEVKKLTKKLSEQTDRTTDQYISSGLKLLMKG</sequence>